<name>ISPH_BACC7</name>
<protein>
    <recommendedName>
        <fullName evidence="1">4-hydroxy-3-methylbut-2-enyl diphosphate reductase</fullName>
        <shortName evidence="1">HMBPP reductase</shortName>
        <ecNumber evidence="1">1.17.7.4</ecNumber>
    </recommendedName>
</protein>
<dbReference type="EC" id="1.17.7.4" evidence="1"/>
<dbReference type="EMBL" id="CP001177">
    <property type="protein sequence ID" value="ACJ77931.1"/>
    <property type="molecule type" value="Genomic_DNA"/>
</dbReference>
<dbReference type="SMR" id="B7HPI8"/>
<dbReference type="KEGG" id="bcr:BCAH187_A4422"/>
<dbReference type="HOGENOM" id="CLU_027486_0_0_9"/>
<dbReference type="UniPathway" id="UPA00056">
    <property type="reaction ID" value="UER00097"/>
</dbReference>
<dbReference type="UniPathway" id="UPA00059">
    <property type="reaction ID" value="UER00105"/>
</dbReference>
<dbReference type="Proteomes" id="UP000002214">
    <property type="component" value="Chromosome"/>
</dbReference>
<dbReference type="GO" id="GO:0051539">
    <property type="term" value="F:4 iron, 4 sulfur cluster binding"/>
    <property type="evidence" value="ECO:0007669"/>
    <property type="project" value="UniProtKB-UniRule"/>
</dbReference>
<dbReference type="GO" id="GO:0051745">
    <property type="term" value="F:4-hydroxy-3-methylbut-2-enyl diphosphate reductase activity"/>
    <property type="evidence" value="ECO:0007669"/>
    <property type="project" value="UniProtKB-UniRule"/>
</dbReference>
<dbReference type="GO" id="GO:0046872">
    <property type="term" value="F:metal ion binding"/>
    <property type="evidence" value="ECO:0007669"/>
    <property type="project" value="UniProtKB-KW"/>
</dbReference>
<dbReference type="GO" id="GO:0050992">
    <property type="term" value="P:dimethylallyl diphosphate biosynthetic process"/>
    <property type="evidence" value="ECO:0007669"/>
    <property type="project" value="UniProtKB-UniRule"/>
</dbReference>
<dbReference type="GO" id="GO:0019288">
    <property type="term" value="P:isopentenyl diphosphate biosynthetic process, methylerythritol 4-phosphate pathway"/>
    <property type="evidence" value="ECO:0007669"/>
    <property type="project" value="UniProtKB-UniRule"/>
</dbReference>
<dbReference type="GO" id="GO:0016114">
    <property type="term" value="P:terpenoid biosynthetic process"/>
    <property type="evidence" value="ECO:0007669"/>
    <property type="project" value="UniProtKB-UniRule"/>
</dbReference>
<dbReference type="CDD" id="cd13944">
    <property type="entry name" value="lytB_ispH"/>
    <property type="match status" value="1"/>
</dbReference>
<dbReference type="Gene3D" id="3.40.50.11270">
    <property type="match status" value="1"/>
</dbReference>
<dbReference type="Gene3D" id="3.40.1010.20">
    <property type="entry name" value="4-hydroxy-3-methylbut-2-enyl diphosphate reductase, catalytic domain"/>
    <property type="match status" value="2"/>
</dbReference>
<dbReference type="HAMAP" id="MF_00191">
    <property type="entry name" value="IspH"/>
    <property type="match status" value="1"/>
</dbReference>
<dbReference type="InterPro" id="IPR003451">
    <property type="entry name" value="LytB/IspH"/>
</dbReference>
<dbReference type="NCBIfam" id="TIGR00216">
    <property type="entry name" value="ispH_lytB"/>
    <property type="match status" value="1"/>
</dbReference>
<dbReference type="NCBIfam" id="NF002187">
    <property type="entry name" value="PRK01045.1-1"/>
    <property type="match status" value="1"/>
</dbReference>
<dbReference type="PANTHER" id="PTHR30426">
    <property type="entry name" value="4-HYDROXY-3-METHYLBUT-2-ENYL DIPHOSPHATE REDUCTASE"/>
    <property type="match status" value="1"/>
</dbReference>
<dbReference type="PANTHER" id="PTHR30426:SF0">
    <property type="entry name" value="4-HYDROXY-3-METHYLBUT-2-ENYL DIPHOSPHATE REDUCTASE"/>
    <property type="match status" value="1"/>
</dbReference>
<dbReference type="Pfam" id="PF02401">
    <property type="entry name" value="LYTB"/>
    <property type="match status" value="1"/>
</dbReference>
<proteinExistence type="inferred from homology"/>
<organism>
    <name type="scientific">Bacillus cereus (strain AH187)</name>
    <dbReference type="NCBI Taxonomy" id="405534"/>
    <lineage>
        <taxon>Bacteria</taxon>
        <taxon>Bacillati</taxon>
        <taxon>Bacillota</taxon>
        <taxon>Bacilli</taxon>
        <taxon>Bacillales</taxon>
        <taxon>Bacillaceae</taxon>
        <taxon>Bacillus</taxon>
        <taxon>Bacillus cereus group</taxon>
    </lineage>
</organism>
<accession>B7HPI8</accession>
<comment type="function">
    <text evidence="1">Catalyzes the conversion of 1-hydroxy-2-methyl-2-(E)-butenyl 4-diphosphate (HMBPP) into a mixture of isopentenyl diphosphate (IPP) and dimethylallyl diphosphate (DMAPP). Acts in the terminal step of the DOXP/MEP pathway for isoprenoid precursor biosynthesis.</text>
</comment>
<comment type="catalytic activity">
    <reaction evidence="1">
        <text>isopentenyl diphosphate + 2 oxidized [2Fe-2S]-[ferredoxin] + H2O = (2E)-4-hydroxy-3-methylbut-2-enyl diphosphate + 2 reduced [2Fe-2S]-[ferredoxin] + 2 H(+)</text>
        <dbReference type="Rhea" id="RHEA:24488"/>
        <dbReference type="Rhea" id="RHEA-COMP:10000"/>
        <dbReference type="Rhea" id="RHEA-COMP:10001"/>
        <dbReference type="ChEBI" id="CHEBI:15377"/>
        <dbReference type="ChEBI" id="CHEBI:15378"/>
        <dbReference type="ChEBI" id="CHEBI:33737"/>
        <dbReference type="ChEBI" id="CHEBI:33738"/>
        <dbReference type="ChEBI" id="CHEBI:128753"/>
        <dbReference type="ChEBI" id="CHEBI:128769"/>
        <dbReference type="EC" id="1.17.7.4"/>
    </reaction>
</comment>
<comment type="catalytic activity">
    <reaction evidence="1">
        <text>dimethylallyl diphosphate + 2 oxidized [2Fe-2S]-[ferredoxin] + H2O = (2E)-4-hydroxy-3-methylbut-2-enyl diphosphate + 2 reduced [2Fe-2S]-[ferredoxin] + 2 H(+)</text>
        <dbReference type="Rhea" id="RHEA:24825"/>
        <dbReference type="Rhea" id="RHEA-COMP:10000"/>
        <dbReference type="Rhea" id="RHEA-COMP:10001"/>
        <dbReference type="ChEBI" id="CHEBI:15377"/>
        <dbReference type="ChEBI" id="CHEBI:15378"/>
        <dbReference type="ChEBI" id="CHEBI:33737"/>
        <dbReference type="ChEBI" id="CHEBI:33738"/>
        <dbReference type="ChEBI" id="CHEBI:57623"/>
        <dbReference type="ChEBI" id="CHEBI:128753"/>
        <dbReference type="EC" id="1.17.7.4"/>
    </reaction>
</comment>
<comment type="cofactor">
    <cofactor evidence="1">
        <name>[4Fe-4S] cluster</name>
        <dbReference type="ChEBI" id="CHEBI:49883"/>
    </cofactor>
    <text evidence="1">Binds 1 [4Fe-4S] cluster per subunit.</text>
</comment>
<comment type="pathway">
    <text evidence="1">Isoprenoid biosynthesis; dimethylallyl diphosphate biosynthesis; dimethylallyl diphosphate from (2E)-4-hydroxy-3-methylbutenyl diphosphate: step 1/1.</text>
</comment>
<comment type="pathway">
    <text evidence="1">Isoprenoid biosynthesis; isopentenyl diphosphate biosynthesis via DXP pathway; isopentenyl diphosphate from 1-deoxy-D-xylulose 5-phosphate: step 6/6.</text>
</comment>
<comment type="similarity">
    <text evidence="1">Belongs to the IspH family.</text>
</comment>
<reference key="1">
    <citation type="submission" date="2008-10" db="EMBL/GenBank/DDBJ databases">
        <title>Genome sequence of Bacillus cereus AH187.</title>
        <authorList>
            <person name="Dodson R.J."/>
            <person name="Durkin A.S."/>
            <person name="Rosovitz M.J."/>
            <person name="Rasko D.A."/>
            <person name="Kolsto A.B."/>
            <person name="Okstad O.A."/>
            <person name="Ravel J."/>
            <person name="Sutton G."/>
        </authorList>
    </citation>
    <scope>NUCLEOTIDE SEQUENCE [LARGE SCALE GENOMIC DNA]</scope>
    <source>
        <strain>AH187</strain>
    </source>
</reference>
<feature type="chain" id="PRO_1000118601" description="4-hydroxy-3-methylbut-2-enyl diphosphate reductase">
    <location>
        <begin position="1"/>
        <end position="316"/>
    </location>
</feature>
<feature type="active site" description="Proton donor" evidence="1">
    <location>
        <position position="133"/>
    </location>
</feature>
<feature type="binding site" evidence="1">
    <location>
        <position position="12"/>
    </location>
    <ligand>
        <name>[4Fe-4S] cluster</name>
        <dbReference type="ChEBI" id="CHEBI:49883"/>
    </ligand>
</feature>
<feature type="binding site" evidence="1">
    <location>
        <position position="43"/>
    </location>
    <ligand>
        <name>(2E)-4-hydroxy-3-methylbut-2-enyl diphosphate</name>
        <dbReference type="ChEBI" id="CHEBI:128753"/>
    </ligand>
</feature>
<feature type="binding site" evidence="1">
    <location>
        <position position="43"/>
    </location>
    <ligand>
        <name>dimethylallyl diphosphate</name>
        <dbReference type="ChEBI" id="CHEBI:57623"/>
    </ligand>
</feature>
<feature type="binding site" evidence="1">
    <location>
        <position position="43"/>
    </location>
    <ligand>
        <name>isopentenyl diphosphate</name>
        <dbReference type="ChEBI" id="CHEBI:128769"/>
    </ligand>
</feature>
<feature type="binding site" evidence="1">
    <location>
        <position position="81"/>
    </location>
    <ligand>
        <name>(2E)-4-hydroxy-3-methylbut-2-enyl diphosphate</name>
        <dbReference type="ChEBI" id="CHEBI:128753"/>
    </ligand>
</feature>
<feature type="binding site" evidence="1">
    <location>
        <position position="81"/>
    </location>
    <ligand>
        <name>dimethylallyl diphosphate</name>
        <dbReference type="ChEBI" id="CHEBI:57623"/>
    </ligand>
</feature>
<feature type="binding site" evidence="1">
    <location>
        <position position="81"/>
    </location>
    <ligand>
        <name>isopentenyl diphosphate</name>
        <dbReference type="ChEBI" id="CHEBI:128769"/>
    </ligand>
</feature>
<feature type="binding site" evidence="1">
    <location>
        <position position="103"/>
    </location>
    <ligand>
        <name>[4Fe-4S] cluster</name>
        <dbReference type="ChEBI" id="CHEBI:49883"/>
    </ligand>
</feature>
<feature type="binding site" evidence="1">
    <location>
        <position position="131"/>
    </location>
    <ligand>
        <name>(2E)-4-hydroxy-3-methylbut-2-enyl diphosphate</name>
        <dbReference type="ChEBI" id="CHEBI:128753"/>
    </ligand>
</feature>
<feature type="binding site" evidence="1">
    <location>
        <position position="131"/>
    </location>
    <ligand>
        <name>dimethylallyl diphosphate</name>
        <dbReference type="ChEBI" id="CHEBI:57623"/>
    </ligand>
</feature>
<feature type="binding site" evidence="1">
    <location>
        <position position="131"/>
    </location>
    <ligand>
        <name>isopentenyl diphosphate</name>
        <dbReference type="ChEBI" id="CHEBI:128769"/>
    </ligand>
</feature>
<feature type="binding site" evidence="1">
    <location>
        <position position="170"/>
    </location>
    <ligand>
        <name>(2E)-4-hydroxy-3-methylbut-2-enyl diphosphate</name>
        <dbReference type="ChEBI" id="CHEBI:128753"/>
    </ligand>
</feature>
<feature type="binding site" evidence="1">
    <location>
        <position position="198"/>
    </location>
    <ligand>
        <name>[4Fe-4S] cluster</name>
        <dbReference type="ChEBI" id="CHEBI:49883"/>
    </ligand>
</feature>
<feature type="binding site" evidence="1">
    <location>
        <position position="226"/>
    </location>
    <ligand>
        <name>(2E)-4-hydroxy-3-methylbut-2-enyl diphosphate</name>
        <dbReference type="ChEBI" id="CHEBI:128753"/>
    </ligand>
</feature>
<feature type="binding site" evidence="1">
    <location>
        <position position="226"/>
    </location>
    <ligand>
        <name>dimethylallyl diphosphate</name>
        <dbReference type="ChEBI" id="CHEBI:57623"/>
    </ligand>
</feature>
<feature type="binding site" evidence="1">
    <location>
        <position position="226"/>
    </location>
    <ligand>
        <name>isopentenyl diphosphate</name>
        <dbReference type="ChEBI" id="CHEBI:128769"/>
    </ligand>
</feature>
<feature type="binding site" evidence="1">
    <location>
        <position position="228"/>
    </location>
    <ligand>
        <name>(2E)-4-hydroxy-3-methylbut-2-enyl diphosphate</name>
        <dbReference type="ChEBI" id="CHEBI:128753"/>
    </ligand>
</feature>
<feature type="binding site" evidence="1">
    <location>
        <position position="228"/>
    </location>
    <ligand>
        <name>dimethylallyl diphosphate</name>
        <dbReference type="ChEBI" id="CHEBI:57623"/>
    </ligand>
</feature>
<feature type="binding site" evidence="1">
    <location>
        <position position="228"/>
    </location>
    <ligand>
        <name>isopentenyl diphosphate</name>
        <dbReference type="ChEBI" id="CHEBI:128769"/>
    </ligand>
</feature>
<feature type="binding site" evidence="1">
    <location>
        <position position="271"/>
    </location>
    <ligand>
        <name>(2E)-4-hydroxy-3-methylbut-2-enyl diphosphate</name>
        <dbReference type="ChEBI" id="CHEBI:128753"/>
    </ligand>
</feature>
<feature type="binding site" evidence="1">
    <location>
        <position position="271"/>
    </location>
    <ligand>
        <name>dimethylallyl diphosphate</name>
        <dbReference type="ChEBI" id="CHEBI:57623"/>
    </ligand>
</feature>
<feature type="binding site" evidence="1">
    <location>
        <position position="271"/>
    </location>
    <ligand>
        <name>isopentenyl diphosphate</name>
        <dbReference type="ChEBI" id="CHEBI:128769"/>
    </ligand>
</feature>
<sequence length="316" mass="34967">MKIVKISPRGYCYGVVDAMVIARNAALDTSLPRPIYILGMIVHNKHVTDAFEEDGIITLDGPSRLDILDKIDSGTVIFTAHGVSPEVKQRAKEKGLTTIDATCPDVTKTHDLIEAKKAEGYHVIYIGKKNHPEPEGAVGIAPDIVHLIERADDLKTLEIPTDKILVTNQTTMSQWDVQHLMEDIQKKFPTAEFHKEICLATQVRQEAVAKQADVADLTIVVGDPKSNNSNRLAQVSQEIAGTKAYRVADVSEIKLEWLQGVENVAVTAGASTPTPITKEVIAFLEQYDPMNPATWERVRKVPLQKILPRVKVKKEQ</sequence>
<evidence type="ECO:0000255" key="1">
    <source>
        <dbReference type="HAMAP-Rule" id="MF_00191"/>
    </source>
</evidence>
<keyword id="KW-0004">4Fe-4S</keyword>
<keyword id="KW-0408">Iron</keyword>
<keyword id="KW-0411">Iron-sulfur</keyword>
<keyword id="KW-0414">Isoprene biosynthesis</keyword>
<keyword id="KW-0479">Metal-binding</keyword>
<keyword id="KW-0560">Oxidoreductase</keyword>
<gene>
    <name evidence="1" type="primary">ispH</name>
    <name type="ordered locus">BCAH187_A4422</name>
</gene>